<organism>
    <name type="scientific">Streptococcus pneumoniae serotype 19F (strain G54)</name>
    <dbReference type="NCBI Taxonomy" id="512566"/>
    <lineage>
        <taxon>Bacteria</taxon>
        <taxon>Bacillati</taxon>
        <taxon>Bacillota</taxon>
        <taxon>Bacilli</taxon>
        <taxon>Lactobacillales</taxon>
        <taxon>Streptococcaceae</taxon>
        <taxon>Streptococcus</taxon>
    </lineage>
</organism>
<gene>
    <name evidence="1" type="primary">recO</name>
    <name type="ordered locus">SPG_0042</name>
</gene>
<feature type="chain" id="PRO_1000099417" description="DNA repair protein RecO">
    <location>
        <begin position="1"/>
        <end position="256"/>
    </location>
</feature>
<dbReference type="EMBL" id="CP001015">
    <property type="protein sequence ID" value="ACF55812.1"/>
    <property type="molecule type" value="Genomic_DNA"/>
</dbReference>
<dbReference type="SMR" id="B5E5I5"/>
<dbReference type="KEGG" id="spx:SPG_0042"/>
<dbReference type="HOGENOM" id="CLU_066632_4_0_9"/>
<dbReference type="GO" id="GO:0043590">
    <property type="term" value="C:bacterial nucleoid"/>
    <property type="evidence" value="ECO:0007669"/>
    <property type="project" value="TreeGrafter"/>
</dbReference>
<dbReference type="GO" id="GO:0006310">
    <property type="term" value="P:DNA recombination"/>
    <property type="evidence" value="ECO:0007669"/>
    <property type="project" value="UniProtKB-UniRule"/>
</dbReference>
<dbReference type="GO" id="GO:0006302">
    <property type="term" value="P:double-strand break repair"/>
    <property type="evidence" value="ECO:0007669"/>
    <property type="project" value="TreeGrafter"/>
</dbReference>
<dbReference type="Gene3D" id="2.40.50.140">
    <property type="entry name" value="Nucleic acid-binding proteins"/>
    <property type="match status" value="1"/>
</dbReference>
<dbReference type="Gene3D" id="1.20.1440.120">
    <property type="entry name" value="Recombination protein O, C-terminal domain"/>
    <property type="match status" value="1"/>
</dbReference>
<dbReference type="HAMAP" id="MF_00201">
    <property type="entry name" value="RecO"/>
    <property type="match status" value="1"/>
</dbReference>
<dbReference type="InterPro" id="IPR037278">
    <property type="entry name" value="ARFGAP/RecO"/>
</dbReference>
<dbReference type="InterPro" id="IPR022572">
    <property type="entry name" value="DNA_rep/recomb_RecO_N"/>
</dbReference>
<dbReference type="InterPro" id="IPR012340">
    <property type="entry name" value="NA-bd_OB-fold"/>
</dbReference>
<dbReference type="InterPro" id="IPR003717">
    <property type="entry name" value="RecO"/>
</dbReference>
<dbReference type="InterPro" id="IPR042242">
    <property type="entry name" value="RecO_C"/>
</dbReference>
<dbReference type="NCBIfam" id="TIGR00613">
    <property type="entry name" value="reco"/>
    <property type="match status" value="1"/>
</dbReference>
<dbReference type="PANTHER" id="PTHR33991">
    <property type="entry name" value="DNA REPAIR PROTEIN RECO"/>
    <property type="match status" value="1"/>
</dbReference>
<dbReference type="PANTHER" id="PTHR33991:SF1">
    <property type="entry name" value="DNA REPAIR PROTEIN RECO"/>
    <property type="match status" value="1"/>
</dbReference>
<dbReference type="Pfam" id="PF02565">
    <property type="entry name" value="RecO_C"/>
    <property type="match status" value="1"/>
</dbReference>
<dbReference type="Pfam" id="PF11967">
    <property type="entry name" value="RecO_N"/>
    <property type="match status" value="1"/>
</dbReference>
<dbReference type="SUPFAM" id="SSF57863">
    <property type="entry name" value="ArfGap/RecO-like zinc finger"/>
    <property type="match status" value="1"/>
</dbReference>
<dbReference type="SUPFAM" id="SSF50249">
    <property type="entry name" value="Nucleic acid-binding proteins"/>
    <property type="match status" value="1"/>
</dbReference>
<sequence>MIQSITSQGLVLYNRNFREDDKLVKIFTEQVGKCMFFVKHAGQSKLAPVIQPLVLARFLLRINDDGLSYIEDYHEVMTFPKINSDLFVMAYATYVAALADASLQDNQQDAPLFAFLQKTLELMEAGLDYQVLTNIFEIQILTRFGISLNFNECVFCHRVGQAFDFSFKYGACLCPEHYHEDERRCHLNPNIPYLLNQFQAIDFETLETISLKPGIKQELRQFMDQLYEEYVGIHLKSKKFIDSLADWGQLLKEEKK</sequence>
<name>RECO_STRP4</name>
<evidence type="ECO:0000255" key="1">
    <source>
        <dbReference type="HAMAP-Rule" id="MF_00201"/>
    </source>
</evidence>
<reference key="1">
    <citation type="journal article" date="2001" name="Microb. Drug Resist.">
        <title>Annotated draft genomic sequence from a Streptococcus pneumoniae type 19F clinical isolate.</title>
        <authorList>
            <person name="Dopazo J."/>
            <person name="Mendoza A."/>
            <person name="Herrero J."/>
            <person name="Caldara F."/>
            <person name="Humbert Y."/>
            <person name="Friedli L."/>
            <person name="Guerrier M."/>
            <person name="Grand-Schenk E."/>
            <person name="Gandin C."/>
            <person name="de Francesco M."/>
            <person name="Polissi A."/>
            <person name="Buell G."/>
            <person name="Feger G."/>
            <person name="Garcia E."/>
            <person name="Peitsch M."/>
            <person name="Garcia-Bustos J.F."/>
        </authorList>
    </citation>
    <scope>NUCLEOTIDE SEQUENCE [LARGE SCALE GENOMIC DNA]</scope>
    <source>
        <strain>G54</strain>
    </source>
</reference>
<reference key="2">
    <citation type="submission" date="2008-03" db="EMBL/GenBank/DDBJ databases">
        <title>Pneumococcal beta glucoside metabolism investigated by whole genome comparison.</title>
        <authorList>
            <person name="Mulas L."/>
            <person name="Trappetti C."/>
            <person name="Hakenbeck R."/>
            <person name="Iannelli F."/>
            <person name="Pozzi G."/>
            <person name="Davidsen T.M."/>
            <person name="Tettelin H."/>
            <person name="Oggioni M."/>
        </authorList>
    </citation>
    <scope>NUCLEOTIDE SEQUENCE [LARGE SCALE GENOMIC DNA]</scope>
    <source>
        <strain>G54</strain>
    </source>
</reference>
<protein>
    <recommendedName>
        <fullName evidence="1">DNA repair protein RecO</fullName>
    </recommendedName>
    <alternativeName>
        <fullName evidence="1">Recombination protein O</fullName>
    </alternativeName>
</protein>
<proteinExistence type="inferred from homology"/>
<accession>B5E5I5</accession>
<comment type="function">
    <text evidence="1">Involved in DNA repair and RecF pathway recombination.</text>
</comment>
<comment type="similarity">
    <text evidence="1">Belongs to the RecO family.</text>
</comment>
<keyword id="KW-0227">DNA damage</keyword>
<keyword id="KW-0233">DNA recombination</keyword>
<keyword id="KW-0234">DNA repair</keyword>